<name>NRDR_THERP</name>
<sequence>MKCPYCGARDARVIDSRELNGGESIRRRRECIACGRRFTTYERVEPIWLMVVKRDGRREPFDVGKLREGLRLALKKRPVSPDEIDRIVATVERELQSLGTSEVPSTLIGEIVLRELKQLDDVAYIRFASVYRRFADLEDLRREMEALGWRPRAAVTVDETS</sequence>
<gene>
    <name evidence="1" type="primary">nrdR</name>
    <name type="ordered locus">trd_0069</name>
</gene>
<protein>
    <recommendedName>
        <fullName evidence="1">Transcriptional repressor NrdR</fullName>
    </recommendedName>
</protein>
<comment type="function">
    <text evidence="1">Negatively regulates transcription of bacterial ribonucleotide reductase nrd genes and operons by binding to NrdR-boxes.</text>
</comment>
<comment type="cofactor">
    <cofactor evidence="1">
        <name>Zn(2+)</name>
        <dbReference type="ChEBI" id="CHEBI:29105"/>
    </cofactor>
    <text evidence="1">Binds 1 zinc ion.</text>
</comment>
<comment type="similarity">
    <text evidence="1">Belongs to the NrdR family.</text>
</comment>
<reference key="1">
    <citation type="journal article" date="2009" name="PLoS ONE">
        <title>Complete genome sequence of the aerobic CO-oxidizing thermophile Thermomicrobium roseum.</title>
        <authorList>
            <person name="Wu D."/>
            <person name="Raymond J."/>
            <person name="Wu M."/>
            <person name="Chatterji S."/>
            <person name="Ren Q."/>
            <person name="Graham J.E."/>
            <person name="Bryant D.A."/>
            <person name="Robb F."/>
            <person name="Colman A."/>
            <person name="Tallon L.J."/>
            <person name="Badger J.H."/>
            <person name="Madupu R."/>
            <person name="Ward N.L."/>
            <person name="Eisen J.A."/>
        </authorList>
    </citation>
    <scope>NUCLEOTIDE SEQUENCE [LARGE SCALE GENOMIC DNA]</scope>
    <source>
        <strain>ATCC 27502 / DSM 5159 / P-2</strain>
    </source>
</reference>
<feature type="chain" id="PRO_1000191826" description="Transcriptional repressor NrdR">
    <location>
        <begin position="1"/>
        <end position="161"/>
    </location>
</feature>
<feature type="domain" description="ATP-cone" evidence="1">
    <location>
        <begin position="49"/>
        <end position="139"/>
    </location>
</feature>
<feature type="zinc finger region" evidence="1">
    <location>
        <begin position="3"/>
        <end position="34"/>
    </location>
</feature>
<organism>
    <name type="scientific">Thermomicrobium roseum (strain ATCC 27502 / DSM 5159 / P-2)</name>
    <dbReference type="NCBI Taxonomy" id="309801"/>
    <lineage>
        <taxon>Bacteria</taxon>
        <taxon>Pseudomonadati</taxon>
        <taxon>Thermomicrobiota</taxon>
        <taxon>Thermomicrobia</taxon>
        <taxon>Thermomicrobiales</taxon>
        <taxon>Thermomicrobiaceae</taxon>
        <taxon>Thermomicrobium</taxon>
    </lineage>
</organism>
<keyword id="KW-0067">ATP-binding</keyword>
<keyword id="KW-0238">DNA-binding</keyword>
<keyword id="KW-0479">Metal-binding</keyword>
<keyword id="KW-0547">Nucleotide-binding</keyword>
<keyword id="KW-1185">Reference proteome</keyword>
<keyword id="KW-0678">Repressor</keyword>
<keyword id="KW-0804">Transcription</keyword>
<keyword id="KW-0805">Transcription regulation</keyword>
<keyword id="KW-0862">Zinc</keyword>
<keyword id="KW-0863">Zinc-finger</keyword>
<accession>B9L287</accession>
<evidence type="ECO:0000255" key="1">
    <source>
        <dbReference type="HAMAP-Rule" id="MF_00440"/>
    </source>
</evidence>
<dbReference type="EMBL" id="CP001275">
    <property type="protein sequence ID" value="ACM04997.1"/>
    <property type="molecule type" value="Genomic_DNA"/>
</dbReference>
<dbReference type="RefSeq" id="WP_012641483.1">
    <property type="nucleotide sequence ID" value="NC_011959.1"/>
</dbReference>
<dbReference type="SMR" id="B9L287"/>
<dbReference type="STRING" id="309801.trd_0069"/>
<dbReference type="KEGG" id="tro:trd_0069"/>
<dbReference type="eggNOG" id="COG1327">
    <property type="taxonomic scope" value="Bacteria"/>
</dbReference>
<dbReference type="HOGENOM" id="CLU_108412_0_0_0"/>
<dbReference type="OrthoDB" id="9807461at2"/>
<dbReference type="Proteomes" id="UP000000447">
    <property type="component" value="Chromosome"/>
</dbReference>
<dbReference type="GO" id="GO:0005524">
    <property type="term" value="F:ATP binding"/>
    <property type="evidence" value="ECO:0007669"/>
    <property type="project" value="UniProtKB-KW"/>
</dbReference>
<dbReference type="GO" id="GO:0003677">
    <property type="term" value="F:DNA binding"/>
    <property type="evidence" value="ECO:0007669"/>
    <property type="project" value="UniProtKB-KW"/>
</dbReference>
<dbReference type="GO" id="GO:0008270">
    <property type="term" value="F:zinc ion binding"/>
    <property type="evidence" value="ECO:0007669"/>
    <property type="project" value="UniProtKB-UniRule"/>
</dbReference>
<dbReference type="GO" id="GO:0045892">
    <property type="term" value="P:negative regulation of DNA-templated transcription"/>
    <property type="evidence" value="ECO:0007669"/>
    <property type="project" value="UniProtKB-UniRule"/>
</dbReference>
<dbReference type="HAMAP" id="MF_00440">
    <property type="entry name" value="NrdR"/>
    <property type="match status" value="1"/>
</dbReference>
<dbReference type="InterPro" id="IPR005144">
    <property type="entry name" value="ATP-cone_dom"/>
</dbReference>
<dbReference type="InterPro" id="IPR055173">
    <property type="entry name" value="NrdR-like_N"/>
</dbReference>
<dbReference type="InterPro" id="IPR003796">
    <property type="entry name" value="RNR_NrdR-like"/>
</dbReference>
<dbReference type="NCBIfam" id="TIGR00244">
    <property type="entry name" value="transcriptional regulator NrdR"/>
    <property type="match status" value="1"/>
</dbReference>
<dbReference type="PANTHER" id="PTHR30455">
    <property type="entry name" value="TRANSCRIPTIONAL REPRESSOR NRDR"/>
    <property type="match status" value="1"/>
</dbReference>
<dbReference type="PANTHER" id="PTHR30455:SF2">
    <property type="entry name" value="TRANSCRIPTIONAL REPRESSOR NRDR"/>
    <property type="match status" value="1"/>
</dbReference>
<dbReference type="Pfam" id="PF03477">
    <property type="entry name" value="ATP-cone"/>
    <property type="match status" value="1"/>
</dbReference>
<dbReference type="Pfam" id="PF22811">
    <property type="entry name" value="Zn_ribbon_NrdR"/>
    <property type="match status" value="1"/>
</dbReference>
<dbReference type="PROSITE" id="PS51161">
    <property type="entry name" value="ATP_CONE"/>
    <property type="match status" value="1"/>
</dbReference>
<proteinExistence type="inferred from homology"/>